<keyword id="KW-0067">ATP-binding</keyword>
<keyword id="KW-0414">Isoprene biosynthesis</keyword>
<keyword id="KW-0418">Kinase</keyword>
<keyword id="KW-0547">Nucleotide-binding</keyword>
<keyword id="KW-0808">Transferase</keyword>
<organism>
    <name type="scientific">Clostridium botulinum (strain Langeland / NCTC 10281 / Type F)</name>
    <dbReference type="NCBI Taxonomy" id="441772"/>
    <lineage>
        <taxon>Bacteria</taxon>
        <taxon>Bacillati</taxon>
        <taxon>Bacillota</taxon>
        <taxon>Clostridia</taxon>
        <taxon>Eubacteriales</taxon>
        <taxon>Clostridiaceae</taxon>
        <taxon>Clostridium</taxon>
    </lineage>
</organism>
<comment type="function">
    <text evidence="1">Catalyzes the phosphorylation of the position 2 hydroxy group of 4-diphosphocytidyl-2C-methyl-D-erythritol.</text>
</comment>
<comment type="catalytic activity">
    <reaction evidence="1">
        <text>4-CDP-2-C-methyl-D-erythritol + ATP = 4-CDP-2-C-methyl-D-erythritol 2-phosphate + ADP + H(+)</text>
        <dbReference type="Rhea" id="RHEA:18437"/>
        <dbReference type="ChEBI" id="CHEBI:15378"/>
        <dbReference type="ChEBI" id="CHEBI:30616"/>
        <dbReference type="ChEBI" id="CHEBI:57823"/>
        <dbReference type="ChEBI" id="CHEBI:57919"/>
        <dbReference type="ChEBI" id="CHEBI:456216"/>
        <dbReference type="EC" id="2.7.1.148"/>
    </reaction>
</comment>
<comment type="pathway">
    <text evidence="1">Isoprenoid biosynthesis; isopentenyl diphosphate biosynthesis via DXP pathway; isopentenyl diphosphate from 1-deoxy-D-xylulose 5-phosphate: step 3/6.</text>
</comment>
<comment type="similarity">
    <text evidence="1">Belongs to the GHMP kinase family. IspE subfamily.</text>
</comment>
<name>ISPE_CLOBL</name>
<gene>
    <name evidence="1" type="primary">ispE</name>
    <name type="ordered locus">CLI_0176</name>
</gene>
<protein>
    <recommendedName>
        <fullName evidence="1">4-diphosphocytidyl-2-C-methyl-D-erythritol kinase</fullName>
        <shortName evidence="1">CMK</shortName>
        <ecNumber evidence="1">2.7.1.148</ecNumber>
    </recommendedName>
    <alternativeName>
        <fullName evidence="1">4-(cytidine-5'-diphospho)-2-C-methyl-D-erythritol kinase</fullName>
    </alternativeName>
</protein>
<evidence type="ECO:0000255" key="1">
    <source>
        <dbReference type="HAMAP-Rule" id="MF_00061"/>
    </source>
</evidence>
<sequence>MLSKAHAKINLSLDVIGKRKDGYHLLKMLMQTIDLYDLIEIKKIKKDIIIDCDREYIPKDRRNLAYKAASLFLDRYNIDSGVRINITKNIPVAAGLAGGSTDAATVLKIMRDIFEPDISNEELKEIALDIGADVPFCIEGGTALCEGIGEKITSIKNFKNQILVLVKPNFGLSTKDVYNNLKVEKIYIHPNTTKLIQSIEEDNLESVARNMRNVLENVTLRKYKTLNSIKSNFIELGALGSMMSGSGPSVFGLFDDMLKAQICYDNMKEKYKEVFITRTI</sequence>
<feature type="chain" id="PRO_1000007834" description="4-diphosphocytidyl-2-C-methyl-D-erythritol kinase">
    <location>
        <begin position="1"/>
        <end position="280"/>
    </location>
</feature>
<feature type="active site" evidence="1">
    <location>
        <position position="8"/>
    </location>
</feature>
<feature type="active site" evidence="1">
    <location>
        <position position="133"/>
    </location>
</feature>
<feature type="binding site" evidence="1">
    <location>
        <begin position="91"/>
        <end position="101"/>
    </location>
    <ligand>
        <name>ATP</name>
        <dbReference type="ChEBI" id="CHEBI:30616"/>
    </ligand>
</feature>
<dbReference type="EC" id="2.7.1.148" evidence="1"/>
<dbReference type="EMBL" id="CP000728">
    <property type="protein sequence ID" value="ABS41684.1"/>
    <property type="molecule type" value="Genomic_DNA"/>
</dbReference>
<dbReference type="RefSeq" id="WP_003404989.1">
    <property type="nucleotide sequence ID" value="NC_009699.1"/>
</dbReference>
<dbReference type="SMR" id="A7G9M4"/>
<dbReference type="KEGG" id="cbf:CLI_0176"/>
<dbReference type="HOGENOM" id="CLU_053057_1_1_9"/>
<dbReference type="UniPathway" id="UPA00056">
    <property type="reaction ID" value="UER00094"/>
</dbReference>
<dbReference type="Proteomes" id="UP000002410">
    <property type="component" value="Chromosome"/>
</dbReference>
<dbReference type="GO" id="GO:0050515">
    <property type="term" value="F:4-(cytidine 5'-diphospho)-2-C-methyl-D-erythritol kinase activity"/>
    <property type="evidence" value="ECO:0007669"/>
    <property type="project" value="UniProtKB-UniRule"/>
</dbReference>
<dbReference type="GO" id="GO:0005524">
    <property type="term" value="F:ATP binding"/>
    <property type="evidence" value="ECO:0007669"/>
    <property type="project" value="UniProtKB-UniRule"/>
</dbReference>
<dbReference type="GO" id="GO:0019288">
    <property type="term" value="P:isopentenyl diphosphate biosynthetic process, methylerythritol 4-phosphate pathway"/>
    <property type="evidence" value="ECO:0007669"/>
    <property type="project" value="UniProtKB-UniRule"/>
</dbReference>
<dbReference type="GO" id="GO:0016114">
    <property type="term" value="P:terpenoid biosynthetic process"/>
    <property type="evidence" value="ECO:0007669"/>
    <property type="project" value="InterPro"/>
</dbReference>
<dbReference type="FunFam" id="3.30.230.10:FF:000029">
    <property type="entry name" value="4-diphosphocytidyl-2-C-methyl-D-erythritol kinase"/>
    <property type="match status" value="1"/>
</dbReference>
<dbReference type="Gene3D" id="3.30.230.10">
    <property type="match status" value="1"/>
</dbReference>
<dbReference type="Gene3D" id="3.30.70.890">
    <property type="entry name" value="GHMP kinase, C-terminal domain"/>
    <property type="match status" value="1"/>
</dbReference>
<dbReference type="HAMAP" id="MF_00061">
    <property type="entry name" value="IspE"/>
    <property type="match status" value="1"/>
</dbReference>
<dbReference type="InterPro" id="IPR013750">
    <property type="entry name" value="GHMP_kinase_C_dom"/>
</dbReference>
<dbReference type="InterPro" id="IPR036554">
    <property type="entry name" value="GHMP_kinase_C_sf"/>
</dbReference>
<dbReference type="InterPro" id="IPR006204">
    <property type="entry name" value="GHMP_kinase_N_dom"/>
</dbReference>
<dbReference type="InterPro" id="IPR004424">
    <property type="entry name" value="IspE"/>
</dbReference>
<dbReference type="InterPro" id="IPR020568">
    <property type="entry name" value="Ribosomal_Su5_D2-typ_SF"/>
</dbReference>
<dbReference type="InterPro" id="IPR014721">
    <property type="entry name" value="Ribsml_uS5_D2-typ_fold_subgr"/>
</dbReference>
<dbReference type="NCBIfam" id="TIGR00154">
    <property type="entry name" value="ispE"/>
    <property type="match status" value="1"/>
</dbReference>
<dbReference type="PANTHER" id="PTHR43527">
    <property type="entry name" value="4-DIPHOSPHOCYTIDYL-2-C-METHYL-D-ERYTHRITOL KINASE, CHLOROPLASTIC"/>
    <property type="match status" value="1"/>
</dbReference>
<dbReference type="PANTHER" id="PTHR43527:SF2">
    <property type="entry name" value="4-DIPHOSPHOCYTIDYL-2-C-METHYL-D-ERYTHRITOL KINASE, CHLOROPLASTIC"/>
    <property type="match status" value="1"/>
</dbReference>
<dbReference type="Pfam" id="PF08544">
    <property type="entry name" value="GHMP_kinases_C"/>
    <property type="match status" value="1"/>
</dbReference>
<dbReference type="Pfam" id="PF00288">
    <property type="entry name" value="GHMP_kinases_N"/>
    <property type="match status" value="1"/>
</dbReference>
<dbReference type="PIRSF" id="PIRSF010376">
    <property type="entry name" value="IspE"/>
    <property type="match status" value="1"/>
</dbReference>
<dbReference type="SUPFAM" id="SSF55060">
    <property type="entry name" value="GHMP Kinase, C-terminal domain"/>
    <property type="match status" value="1"/>
</dbReference>
<dbReference type="SUPFAM" id="SSF54211">
    <property type="entry name" value="Ribosomal protein S5 domain 2-like"/>
    <property type="match status" value="1"/>
</dbReference>
<proteinExistence type="inferred from homology"/>
<reference key="1">
    <citation type="submission" date="2007-06" db="EMBL/GenBank/DDBJ databases">
        <authorList>
            <person name="Brinkac L.M."/>
            <person name="Daugherty S."/>
            <person name="Dodson R.J."/>
            <person name="Madupu R."/>
            <person name="Brown J.L."/>
            <person name="Bruce D."/>
            <person name="Detter C."/>
            <person name="Munk C."/>
            <person name="Smith L.A."/>
            <person name="Smith T.J."/>
            <person name="White O."/>
            <person name="Brettin T.S."/>
        </authorList>
    </citation>
    <scope>NUCLEOTIDE SEQUENCE [LARGE SCALE GENOMIC DNA]</scope>
    <source>
        <strain>Langeland / NCTC 10281 / Type F</strain>
    </source>
</reference>
<accession>A7G9M4</accession>